<organism>
    <name type="scientific">Cutibacterium acnes (strain DSM 16379 / KPA171202)</name>
    <name type="common">Propionibacterium acnes</name>
    <dbReference type="NCBI Taxonomy" id="267747"/>
    <lineage>
        <taxon>Bacteria</taxon>
        <taxon>Bacillati</taxon>
        <taxon>Actinomycetota</taxon>
        <taxon>Actinomycetes</taxon>
        <taxon>Propionibacteriales</taxon>
        <taxon>Propionibacteriaceae</taxon>
        <taxon>Cutibacterium</taxon>
    </lineage>
</organism>
<dbReference type="EMBL" id="AE017283">
    <property type="protein sequence ID" value="AAT83571.1"/>
    <property type="molecule type" value="Genomic_DNA"/>
</dbReference>
<dbReference type="RefSeq" id="WP_002514853.1">
    <property type="nucleotide sequence ID" value="NZ_CP025935.1"/>
</dbReference>
<dbReference type="PDB" id="8CRX">
    <property type="method" value="EM"/>
    <property type="resolution" value="2.78 A"/>
    <property type="chains" value="n=1-127"/>
</dbReference>
<dbReference type="PDB" id="8CVM">
    <property type="method" value="EM"/>
    <property type="resolution" value="2.66 A"/>
    <property type="chains" value="n=1-127"/>
</dbReference>
<dbReference type="PDBsum" id="8CRX"/>
<dbReference type="PDBsum" id="8CVM"/>
<dbReference type="SMR" id="Q6A6P2"/>
<dbReference type="EnsemblBacteria" id="AAT83571">
    <property type="protein sequence ID" value="AAT83571"/>
    <property type="gene ID" value="PPA1845"/>
</dbReference>
<dbReference type="GeneID" id="92857794"/>
<dbReference type="KEGG" id="pac:PPA1845"/>
<dbReference type="eggNOG" id="COG0256">
    <property type="taxonomic scope" value="Bacteria"/>
</dbReference>
<dbReference type="HOGENOM" id="CLU_098841_0_1_11"/>
<dbReference type="Proteomes" id="UP000000603">
    <property type="component" value="Chromosome"/>
</dbReference>
<dbReference type="GO" id="GO:0022625">
    <property type="term" value="C:cytosolic large ribosomal subunit"/>
    <property type="evidence" value="ECO:0007669"/>
    <property type="project" value="TreeGrafter"/>
</dbReference>
<dbReference type="GO" id="GO:0008097">
    <property type="term" value="F:5S rRNA binding"/>
    <property type="evidence" value="ECO:0007669"/>
    <property type="project" value="TreeGrafter"/>
</dbReference>
<dbReference type="GO" id="GO:0003735">
    <property type="term" value="F:structural constituent of ribosome"/>
    <property type="evidence" value="ECO:0007669"/>
    <property type="project" value="InterPro"/>
</dbReference>
<dbReference type="GO" id="GO:0006412">
    <property type="term" value="P:translation"/>
    <property type="evidence" value="ECO:0007669"/>
    <property type="project" value="UniProtKB-UniRule"/>
</dbReference>
<dbReference type="CDD" id="cd00432">
    <property type="entry name" value="Ribosomal_L18_L5e"/>
    <property type="match status" value="1"/>
</dbReference>
<dbReference type="FunFam" id="3.30.420.100:FF:000001">
    <property type="entry name" value="50S ribosomal protein L18"/>
    <property type="match status" value="1"/>
</dbReference>
<dbReference type="Gene3D" id="3.30.420.100">
    <property type="match status" value="1"/>
</dbReference>
<dbReference type="HAMAP" id="MF_01337_B">
    <property type="entry name" value="Ribosomal_uL18_B"/>
    <property type="match status" value="1"/>
</dbReference>
<dbReference type="InterPro" id="IPR004389">
    <property type="entry name" value="Ribosomal_uL18_bac-type"/>
</dbReference>
<dbReference type="InterPro" id="IPR005484">
    <property type="entry name" value="Ribosomal_uL18_bac/euk"/>
</dbReference>
<dbReference type="NCBIfam" id="TIGR00060">
    <property type="entry name" value="L18_bact"/>
    <property type="match status" value="1"/>
</dbReference>
<dbReference type="PANTHER" id="PTHR12899">
    <property type="entry name" value="39S RIBOSOMAL PROTEIN L18, MITOCHONDRIAL"/>
    <property type="match status" value="1"/>
</dbReference>
<dbReference type="PANTHER" id="PTHR12899:SF3">
    <property type="entry name" value="LARGE RIBOSOMAL SUBUNIT PROTEIN UL18M"/>
    <property type="match status" value="1"/>
</dbReference>
<dbReference type="Pfam" id="PF00861">
    <property type="entry name" value="Ribosomal_L18p"/>
    <property type="match status" value="1"/>
</dbReference>
<dbReference type="SUPFAM" id="SSF53137">
    <property type="entry name" value="Translational machinery components"/>
    <property type="match status" value="1"/>
</dbReference>
<comment type="function">
    <text evidence="1">This is one of the proteins that bind and probably mediate the attachment of the 5S RNA into the large ribosomal subunit, where it forms part of the central protuberance.</text>
</comment>
<comment type="subunit">
    <text evidence="1">Part of the 50S ribosomal subunit; part of the 5S rRNA/L5/L18/L25 subcomplex. Contacts the 5S and 23S rRNAs.</text>
</comment>
<comment type="similarity">
    <text evidence="1">Belongs to the universal ribosomal protein uL18 family.</text>
</comment>
<protein>
    <recommendedName>
        <fullName evidence="1">Large ribosomal subunit protein uL18</fullName>
    </recommendedName>
    <alternativeName>
        <fullName evidence="3">50S ribosomal protein L18</fullName>
    </alternativeName>
</protein>
<accession>Q6A6P2</accession>
<gene>
    <name evidence="1" type="primary">rplR</name>
    <name type="ordered locus">PPA1845</name>
</gene>
<proteinExistence type="evidence at protein level"/>
<evidence type="ECO:0000255" key="1">
    <source>
        <dbReference type="HAMAP-Rule" id="MF_01337"/>
    </source>
</evidence>
<evidence type="ECO:0000256" key="2">
    <source>
        <dbReference type="SAM" id="MobiDB-lite"/>
    </source>
</evidence>
<evidence type="ECO:0000305" key="3"/>
<evidence type="ECO:0007829" key="4">
    <source>
        <dbReference type="PDB" id="8CVM"/>
    </source>
</evidence>
<keyword id="KW-0002">3D-structure</keyword>
<keyword id="KW-0687">Ribonucleoprotein</keyword>
<keyword id="KW-0689">Ribosomal protein</keyword>
<keyword id="KW-0694">RNA-binding</keyword>
<keyword id="KW-0699">rRNA-binding</keyword>
<name>RL18_CUTAK</name>
<sequence>MASTLTVRKSLSDRAKARARRQARGRKKIFGTVERPRMVVTRSSKHVFVQVIDDVAGNTLVSASTMEAELREMSGDKTAKAARVGTIIGERAKAAGITKVVFDKAGNQYHGRIAALADAAREAGLDF</sequence>
<feature type="chain" id="PRO_0000131318" description="Large ribosomal subunit protein uL18">
    <location>
        <begin position="1"/>
        <end position="127"/>
    </location>
</feature>
<feature type="region of interest" description="Disordered" evidence="2">
    <location>
        <begin position="1"/>
        <end position="26"/>
    </location>
</feature>
<feature type="compositionally biased region" description="Basic residues" evidence="2">
    <location>
        <begin position="17"/>
        <end position="26"/>
    </location>
</feature>
<feature type="helix" evidence="4">
    <location>
        <begin position="13"/>
        <end position="26"/>
    </location>
</feature>
<feature type="strand" evidence="4">
    <location>
        <begin position="33"/>
        <end position="35"/>
    </location>
</feature>
<feature type="strand" evidence="4">
    <location>
        <begin position="37"/>
        <end position="42"/>
    </location>
</feature>
<feature type="strand" evidence="4">
    <location>
        <begin position="47"/>
        <end position="53"/>
    </location>
</feature>
<feature type="turn" evidence="4">
    <location>
        <begin position="54"/>
        <end position="57"/>
    </location>
</feature>
<feature type="strand" evidence="4">
    <location>
        <begin position="58"/>
        <end position="64"/>
    </location>
</feature>
<feature type="helix" evidence="4">
    <location>
        <begin position="68"/>
        <end position="71"/>
    </location>
</feature>
<feature type="helix" evidence="4">
    <location>
        <begin position="77"/>
        <end position="95"/>
    </location>
</feature>
<feature type="strand" evidence="4">
    <location>
        <begin position="101"/>
        <end position="103"/>
    </location>
</feature>
<feature type="helix" evidence="4">
    <location>
        <begin position="112"/>
        <end position="123"/>
    </location>
</feature>
<reference key="1">
    <citation type="journal article" date="2004" name="Science">
        <title>The complete genome sequence of Propionibacterium acnes, a commensal of human skin.</title>
        <authorList>
            <person name="Brueggemann H."/>
            <person name="Henne A."/>
            <person name="Hoster F."/>
            <person name="Liesegang H."/>
            <person name="Wiezer A."/>
            <person name="Strittmatter A."/>
            <person name="Hujer S."/>
            <person name="Duerre P."/>
            <person name="Gottschalk G."/>
        </authorList>
    </citation>
    <scope>NUCLEOTIDE SEQUENCE [LARGE SCALE GENOMIC DNA]</scope>
    <source>
        <strain>DSM 16379 / KPA171202</strain>
    </source>
</reference>